<protein>
    <recommendedName>
        <fullName evidence="1">GTPase Obg</fullName>
        <ecNumber evidence="1">3.6.5.-</ecNumber>
    </recommendedName>
    <alternativeName>
        <fullName evidence="1">GTP-binding protein Obg</fullName>
    </alternativeName>
</protein>
<organism>
    <name type="scientific">Salinibacter ruber (strain DSM 13855 / M31)</name>
    <dbReference type="NCBI Taxonomy" id="309807"/>
    <lineage>
        <taxon>Bacteria</taxon>
        <taxon>Pseudomonadati</taxon>
        <taxon>Rhodothermota</taxon>
        <taxon>Rhodothermia</taxon>
        <taxon>Rhodothermales</taxon>
        <taxon>Salinibacteraceae</taxon>
        <taxon>Salinibacter</taxon>
    </lineage>
</organism>
<reference key="1">
    <citation type="journal article" date="2005" name="Proc. Natl. Acad. Sci. U.S.A.">
        <title>The genome of Salinibacter ruber: convergence and gene exchange among hyperhalophilic bacteria and archaea.</title>
        <authorList>
            <person name="Mongodin E.F."/>
            <person name="Nelson K.E."/>
            <person name="Daugherty S."/>
            <person name="DeBoy R.T."/>
            <person name="Wister J."/>
            <person name="Khouri H."/>
            <person name="Weidman J."/>
            <person name="Walsh D.A."/>
            <person name="Papke R.T."/>
            <person name="Sanchez Perez G."/>
            <person name="Sharma A.K."/>
            <person name="Nesbo C.L."/>
            <person name="MacLeod D."/>
            <person name="Bapteste E."/>
            <person name="Doolittle W.F."/>
            <person name="Charlebois R.L."/>
            <person name="Legault B."/>
            <person name="Rodriguez-Valera F."/>
        </authorList>
    </citation>
    <scope>NUCLEOTIDE SEQUENCE [LARGE SCALE GENOMIC DNA]</scope>
    <source>
        <strain>DSM 13855 / CECT 5946 / M31</strain>
    </source>
</reference>
<accession>Q2S3C0</accession>
<keyword id="KW-0963">Cytoplasm</keyword>
<keyword id="KW-0342">GTP-binding</keyword>
<keyword id="KW-0378">Hydrolase</keyword>
<keyword id="KW-0460">Magnesium</keyword>
<keyword id="KW-0479">Metal-binding</keyword>
<keyword id="KW-0547">Nucleotide-binding</keyword>
<keyword id="KW-1185">Reference proteome</keyword>
<gene>
    <name evidence="1" type="primary">obg</name>
    <name type="ordered locus">SRU_1186</name>
</gene>
<sequence>MKFLDQVDLRVSSGDGGKGVVAWRREKYVPKGGPSGGDGGDGGSVYVEADENLYTLMDLSHNTQVFAEDGEPGGRREQTGASGEDKVIRVPPGTVVKTQTGEVLGEVVEPGQRICVAEGGQGGRGNAFFKSSTNQAPRESQPGEPGEERDLTFELKLMADVGLVGFPNAGKSTLVSSVSAAEPEVADYPFTTLTPQLGMVYVSEYETFVMADIPGIIEDAHEGKGLGLQFLRHIERTSVLLFVIPITSQDLGEEYEALLHELESHEASLLDKPRVVALSKIDILAPDERALLPDVVADEFPDDVPLLPISAVADVGLDQLKYTLFDTVHSTQSADAIDA</sequence>
<feature type="chain" id="PRO_0000386216" description="GTPase Obg">
    <location>
        <begin position="1"/>
        <end position="339"/>
    </location>
</feature>
<feature type="domain" description="Obg" evidence="2">
    <location>
        <begin position="1"/>
        <end position="158"/>
    </location>
</feature>
<feature type="domain" description="OBG-type G" evidence="1">
    <location>
        <begin position="159"/>
        <end position="329"/>
    </location>
</feature>
<feature type="region of interest" description="Disordered" evidence="3">
    <location>
        <begin position="66"/>
        <end position="86"/>
    </location>
</feature>
<feature type="region of interest" description="Disordered" evidence="3">
    <location>
        <begin position="125"/>
        <end position="148"/>
    </location>
</feature>
<feature type="compositionally biased region" description="Basic and acidic residues" evidence="3">
    <location>
        <begin position="72"/>
        <end position="86"/>
    </location>
</feature>
<feature type="compositionally biased region" description="Polar residues" evidence="3">
    <location>
        <begin position="129"/>
        <end position="138"/>
    </location>
</feature>
<feature type="binding site" evidence="1">
    <location>
        <begin position="165"/>
        <end position="172"/>
    </location>
    <ligand>
        <name>GTP</name>
        <dbReference type="ChEBI" id="CHEBI:37565"/>
    </ligand>
</feature>
<feature type="binding site" evidence="1">
    <location>
        <position position="172"/>
    </location>
    <ligand>
        <name>Mg(2+)</name>
        <dbReference type="ChEBI" id="CHEBI:18420"/>
    </ligand>
</feature>
<feature type="binding site" evidence="1">
    <location>
        <begin position="190"/>
        <end position="194"/>
    </location>
    <ligand>
        <name>GTP</name>
        <dbReference type="ChEBI" id="CHEBI:37565"/>
    </ligand>
</feature>
<feature type="binding site" evidence="1">
    <location>
        <position position="192"/>
    </location>
    <ligand>
        <name>Mg(2+)</name>
        <dbReference type="ChEBI" id="CHEBI:18420"/>
    </ligand>
</feature>
<feature type="binding site" evidence="1">
    <location>
        <begin position="212"/>
        <end position="215"/>
    </location>
    <ligand>
        <name>GTP</name>
        <dbReference type="ChEBI" id="CHEBI:37565"/>
    </ligand>
</feature>
<feature type="binding site" evidence="1">
    <location>
        <begin position="279"/>
        <end position="282"/>
    </location>
    <ligand>
        <name>GTP</name>
        <dbReference type="ChEBI" id="CHEBI:37565"/>
    </ligand>
</feature>
<feature type="binding site" evidence="1">
    <location>
        <begin position="310"/>
        <end position="312"/>
    </location>
    <ligand>
        <name>GTP</name>
        <dbReference type="ChEBI" id="CHEBI:37565"/>
    </ligand>
</feature>
<proteinExistence type="inferred from homology"/>
<comment type="function">
    <text evidence="1">An essential GTPase which binds GTP, GDP and possibly (p)ppGpp with moderate affinity, with high nucleotide exchange rates and a fairly low GTP hydrolysis rate. Plays a role in control of the cell cycle, stress response, ribosome biogenesis and in those bacteria that undergo differentiation, in morphogenesis control.</text>
</comment>
<comment type="cofactor">
    <cofactor evidence="1">
        <name>Mg(2+)</name>
        <dbReference type="ChEBI" id="CHEBI:18420"/>
    </cofactor>
</comment>
<comment type="subunit">
    <text evidence="1">Monomer.</text>
</comment>
<comment type="subcellular location">
    <subcellularLocation>
        <location evidence="1">Cytoplasm</location>
    </subcellularLocation>
</comment>
<comment type="similarity">
    <text evidence="1">Belongs to the TRAFAC class OBG-HflX-like GTPase superfamily. OBG GTPase family.</text>
</comment>
<evidence type="ECO:0000255" key="1">
    <source>
        <dbReference type="HAMAP-Rule" id="MF_01454"/>
    </source>
</evidence>
<evidence type="ECO:0000255" key="2">
    <source>
        <dbReference type="PROSITE-ProRule" id="PRU01231"/>
    </source>
</evidence>
<evidence type="ECO:0000256" key="3">
    <source>
        <dbReference type="SAM" id="MobiDB-lite"/>
    </source>
</evidence>
<name>OBG_SALRD</name>
<dbReference type="EC" id="3.6.5.-" evidence="1"/>
<dbReference type="EMBL" id="CP000159">
    <property type="protein sequence ID" value="ABC45635.1"/>
    <property type="molecule type" value="Genomic_DNA"/>
</dbReference>
<dbReference type="RefSeq" id="WP_011403939.1">
    <property type="nucleotide sequence ID" value="NC_007677.1"/>
</dbReference>
<dbReference type="RefSeq" id="YP_445311.1">
    <property type="nucleotide sequence ID" value="NC_007677.1"/>
</dbReference>
<dbReference type="SMR" id="Q2S3C0"/>
<dbReference type="STRING" id="309807.SRU_1186"/>
<dbReference type="EnsemblBacteria" id="ABC45635">
    <property type="protein sequence ID" value="ABC45635"/>
    <property type="gene ID" value="SRU_1186"/>
</dbReference>
<dbReference type="GeneID" id="83728098"/>
<dbReference type="KEGG" id="sru:SRU_1186"/>
<dbReference type="PATRIC" id="fig|309807.25.peg.1232"/>
<dbReference type="eggNOG" id="COG0536">
    <property type="taxonomic scope" value="Bacteria"/>
</dbReference>
<dbReference type="HOGENOM" id="CLU_011747_2_0_10"/>
<dbReference type="OrthoDB" id="9807318at2"/>
<dbReference type="Proteomes" id="UP000008674">
    <property type="component" value="Chromosome"/>
</dbReference>
<dbReference type="GO" id="GO:0005737">
    <property type="term" value="C:cytoplasm"/>
    <property type="evidence" value="ECO:0007669"/>
    <property type="project" value="UniProtKB-SubCell"/>
</dbReference>
<dbReference type="GO" id="GO:0005525">
    <property type="term" value="F:GTP binding"/>
    <property type="evidence" value="ECO:0007669"/>
    <property type="project" value="UniProtKB-UniRule"/>
</dbReference>
<dbReference type="GO" id="GO:0003924">
    <property type="term" value="F:GTPase activity"/>
    <property type="evidence" value="ECO:0007669"/>
    <property type="project" value="UniProtKB-UniRule"/>
</dbReference>
<dbReference type="GO" id="GO:0000287">
    <property type="term" value="F:magnesium ion binding"/>
    <property type="evidence" value="ECO:0007669"/>
    <property type="project" value="InterPro"/>
</dbReference>
<dbReference type="GO" id="GO:0042254">
    <property type="term" value="P:ribosome biogenesis"/>
    <property type="evidence" value="ECO:0007669"/>
    <property type="project" value="UniProtKB-UniRule"/>
</dbReference>
<dbReference type="CDD" id="cd01898">
    <property type="entry name" value="Obg"/>
    <property type="match status" value="1"/>
</dbReference>
<dbReference type="FunFam" id="2.70.210.12:FF:000001">
    <property type="entry name" value="GTPase Obg"/>
    <property type="match status" value="1"/>
</dbReference>
<dbReference type="Gene3D" id="2.70.210.12">
    <property type="entry name" value="GTP1/OBG domain"/>
    <property type="match status" value="1"/>
</dbReference>
<dbReference type="Gene3D" id="3.40.50.300">
    <property type="entry name" value="P-loop containing nucleotide triphosphate hydrolases"/>
    <property type="match status" value="1"/>
</dbReference>
<dbReference type="HAMAP" id="MF_01454">
    <property type="entry name" value="GTPase_Obg"/>
    <property type="match status" value="1"/>
</dbReference>
<dbReference type="InterPro" id="IPR031167">
    <property type="entry name" value="G_OBG"/>
</dbReference>
<dbReference type="InterPro" id="IPR006073">
    <property type="entry name" value="GTP-bd"/>
</dbReference>
<dbReference type="InterPro" id="IPR014100">
    <property type="entry name" value="GTP-bd_Obg/CgtA"/>
</dbReference>
<dbReference type="InterPro" id="IPR006169">
    <property type="entry name" value="GTP1_OBG_dom"/>
</dbReference>
<dbReference type="InterPro" id="IPR036726">
    <property type="entry name" value="GTP1_OBG_dom_sf"/>
</dbReference>
<dbReference type="InterPro" id="IPR045086">
    <property type="entry name" value="OBG_GTPase"/>
</dbReference>
<dbReference type="InterPro" id="IPR027417">
    <property type="entry name" value="P-loop_NTPase"/>
</dbReference>
<dbReference type="NCBIfam" id="TIGR02729">
    <property type="entry name" value="Obg_CgtA"/>
    <property type="match status" value="1"/>
</dbReference>
<dbReference type="NCBIfam" id="NF008955">
    <property type="entry name" value="PRK12297.1"/>
    <property type="match status" value="1"/>
</dbReference>
<dbReference type="NCBIfam" id="NF008956">
    <property type="entry name" value="PRK12299.1"/>
    <property type="match status" value="1"/>
</dbReference>
<dbReference type="PANTHER" id="PTHR11702">
    <property type="entry name" value="DEVELOPMENTALLY REGULATED GTP-BINDING PROTEIN-RELATED"/>
    <property type="match status" value="1"/>
</dbReference>
<dbReference type="PANTHER" id="PTHR11702:SF31">
    <property type="entry name" value="MITOCHONDRIAL RIBOSOME-ASSOCIATED GTPASE 2"/>
    <property type="match status" value="1"/>
</dbReference>
<dbReference type="Pfam" id="PF01018">
    <property type="entry name" value="GTP1_OBG"/>
    <property type="match status" value="1"/>
</dbReference>
<dbReference type="Pfam" id="PF01926">
    <property type="entry name" value="MMR_HSR1"/>
    <property type="match status" value="1"/>
</dbReference>
<dbReference type="PIRSF" id="PIRSF002401">
    <property type="entry name" value="GTP_bd_Obg/CgtA"/>
    <property type="match status" value="1"/>
</dbReference>
<dbReference type="PRINTS" id="PR00326">
    <property type="entry name" value="GTP1OBG"/>
</dbReference>
<dbReference type="SUPFAM" id="SSF82051">
    <property type="entry name" value="Obg GTP-binding protein N-terminal domain"/>
    <property type="match status" value="1"/>
</dbReference>
<dbReference type="SUPFAM" id="SSF52540">
    <property type="entry name" value="P-loop containing nucleoside triphosphate hydrolases"/>
    <property type="match status" value="1"/>
</dbReference>
<dbReference type="PROSITE" id="PS51710">
    <property type="entry name" value="G_OBG"/>
    <property type="match status" value="1"/>
</dbReference>
<dbReference type="PROSITE" id="PS51883">
    <property type="entry name" value="OBG"/>
    <property type="match status" value="1"/>
</dbReference>